<protein>
    <recommendedName>
        <fullName>Glucarate dehydratase</fullName>
        <shortName>GDH</shortName>
        <shortName>GlucD</shortName>
        <ecNumber>4.2.1.40</ecNumber>
    </recommendedName>
</protein>
<accession>P0AES3</accession>
<accession>P76637</accession>
<accession>P78217</accession>
<accession>Q46914</accession>
<sequence length="446" mass="49141">MSSQFTTPVVTEMQVIPVAGHDSMLMNLSGAHAPFFTRNIVIIKDNSGHTGVGEIPGGEKIRKTLEDAIPLVVGKTLGEYKNVLTLVRNTFADRDAGGRGLQTFDLRTTIHVVTGIEAAMLDLLGQHLGVNVASLLGDGQQRSEVEMLGYLFFVGNRKATPLPYQSQPDDSCDWYRLRHEEAMTPDAVVRLAEAAYEKYGFNDFKLKGGVLAGEEEAESIVALAQRFPQARITLDPNGAWSLNEAIKIGKYLKGSLAYAEDPCGAEQGFSGREVMAEFRRATGLPTATNMIATDWRQMGHTLSLQSVDIPLADPHFWTMQGSVRVAQMCHEFGLTWGSHSNNHFDISLAMFTHVAAAAPGKITAIDTHWIWQEGNQRLTKEPFEIKGGLVQVPEKPGLGVEIDMDQVMKAHELYQKHGLGARDDAMGMQYLIPGWTFDNKRPCMVR</sequence>
<comment type="function">
    <text evidence="1">Catalyzes the dehydration of glucarate to 5-keto-4-deoxy-D-glucarate (5-kdGluc). Also acts on L-idarate (By similarity).</text>
</comment>
<comment type="catalytic activity">
    <reaction>
        <text>D-glucarate = 5-dehydro-4-deoxy-D-glucarate + H2O</text>
        <dbReference type="Rhea" id="RHEA:14573"/>
        <dbReference type="ChEBI" id="CHEBI:15377"/>
        <dbReference type="ChEBI" id="CHEBI:30612"/>
        <dbReference type="ChEBI" id="CHEBI:42819"/>
        <dbReference type="EC" id="4.2.1.40"/>
    </reaction>
</comment>
<comment type="cofactor">
    <cofactor evidence="1">
        <name>Mg(2+)</name>
        <dbReference type="ChEBI" id="CHEBI:18420"/>
    </cofactor>
</comment>
<comment type="pathway">
    <text>Carbohydrate acid metabolism; D-glucarate degradation; 2,5-dioxopentanoate from D-glucarate: step 1/2.</text>
</comment>
<comment type="subunit">
    <text evidence="1">Homodimer.</text>
</comment>
<comment type="similarity">
    <text evidence="2">Belongs to the mandelate racemase/muconate lactonizing enzyme family. GlucD subfamily.</text>
</comment>
<name>GUDD_ECO57</name>
<organism>
    <name type="scientific">Escherichia coli O157:H7</name>
    <dbReference type="NCBI Taxonomy" id="83334"/>
    <lineage>
        <taxon>Bacteria</taxon>
        <taxon>Pseudomonadati</taxon>
        <taxon>Pseudomonadota</taxon>
        <taxon>Gammaproteobacteria</taxon>
        <taxon>Enterobacterales</taxon>
        <taxon>Enterobacteriaceae</taxon>
        <taxon>Escherichia</taxon>
    </lineage>
</organism>
<reference key="1">
    <citation type="journal article" date="2001" name="Nature">
        <title>Genome sequence of enterohaemorrhagic Escherichia coli O157:H7.</title>
        <authorList>
            <person name="Perna N.T."/>
            <person name="Plunkett G. III"/>
            <person name="Burland V."/>
            <person name="Mau B."/>
            <person name="Glasner J.D."/>
            <person name="Rose D.J."/>
            <person name="Mayhew G.F."/>
            <person name="Evans P.S."/>
            <person name="Gregor J."/>
            <person name="Kirkpatrick H.A."/>
            <person name="Posfai G."/>
            <person name="Hackett J."/>
            <person name="Klink S."/>
            <person name="Boutin A."/>
            <person name="Shao Y."/>
            <person name="Miller L."/>
            <person name="Grotbeck E.J."/>
            <person name="Davis N.W."/>
            <person name="Lim A."/>
            <person name="Dimalanta E.T."/>
            <person name="Potamousis K."/>
            <person name="Apodaca J."/>
            <person name="Anantharaman T.S."/>
            <person name="Lin J."/>
            <person name="Yen G."/>
            <person name="Schwartz D.C."/>
            <person name="Welch R.A."/>
            <person name="Blattner F.R."/>
        </authorList>
    </citation>
    <scope>NUCLEOTIDE SEQUENCE [LARGE SCALE GENOMIC DNA]</scope>
    <source>
        <strain>O157:H7 / EDL933 / ATCC 700927 / EHEC</strain>
    </source>
</reference>
<reference key="2">
    <citation type="journal article" date="2001" name="DNA Res.">
        <title>Complete genome sequence of enterohemorrhagic Escherichia coli O157:H7 and genomic comparison with a laboratory strain K-12.</title>
        <authorList>
            <person name="Hayashi T."/>
            <person name="Makino K."/>
            <person name="Ohnishi M."/>
            <person name="Kurokawa K."/>
            <person name="Ishii K."/>
            <person name="Yokoyama K."/>
            <person name="Han C.-G."/>
            <person name="Ohtsubo E."/>
            <person name="Nakayama K."/>
            <person name="Murata T."/>
            <person name="Tanaka M."/>
            <person name="Tobe T."/>
            <person name="Iida T."/>
            <person name="Takami H."/>
            <person name="Honda T."/>
            <person name="Sasakawa C."/>
            <person name="Ogasawara N."/>
            <person name="Yasunaga T."/>
            <person name="Kuhara S."/>
            <person name="Shiba T."/>
            <person name="Hattori M."/>
            <person name="Shinagawa H."/>
        </authorList>
    </citation>
    <scope>NUCLEOTIDE SEQUENCE [LARGE SCALE GENOMIC DNA]</scope>
    <source>
        <strain>O157:H7 / Sakai / RIMD 0509952 / EHEC</strain>
    </source>
</reference>
<proteinExistence type="inferred from homology"/>
<gene>
    <name type="primary">gudD</name>
    <name type="ordered locus">Z4102</name>
    <name type="ordered locus">ECs3647</name>
</gene>
<feature type="initiator methionine" description="Removed" evidence="1">
    <location>
        <position position="1"/>
    </location>
</feature>
<feature type="chain" id="PRO_0000171265" description="Glucarate dehydratase">
    <location>
        <begin position="2"/>
        <end position="446"/>
    </location>
</feature>
<feature type="active site" description="Proton acceptor" evidence="1">
    <location>
        <position position="207"/>
    </location>
</feature>
<feature type="active site" description="Proton acceptor" evidence="1">
    <location>
        <position position="339"/>
    </location>
</feature>
<feature type="binding site" evidence="1">
    <location>
        <position position="32"/>
    </location>
    <ligand>
        <name>substrate</name>
    </ligand>
</feature>
<feature type="binding site" evidence="1">
    <location>
        <position position="103"/>
    </location>
    <ligand>
        <name>substrate</name>
    </ligand>
</feature>
<feature type="binding site" evidence="1">
    <location>
        <position position="150"/>
    </location>
    <ligand>
        <name>substrate</name>
    </ligand>
</feature>
<feature type="binding site" evidence="1">
    <location>
        <position position="205"/>
    </location>
    <ligand>
        <name>substrate</name>
    </ligand>
</feature>
<feature type="binding site" evidence="1">
    <location>
        <begin position="235"/>
        <end position="237"/>
    </location>
    <ligand>
        <name>substrate</name>
    </ligand>
</feature>
<feature type="binding site" evidence="1">
    <location>
        <position position="235"/>
    </location>
    <ligand>
        <name>Mg(2+)</name>
        <dbReference type="ChEBI" id="CHEBI:18420"/>
    </ligand>
</feature>
<feature type="binding site" evidence="1">
    <location>
        <position position="266"/>
    </location>
    <ligand>
        <name>Mg(2+)</name>
        <dbReference type="ChEBI" id="CHEBI:18420"/>
    </ligand>
</feature>
<feature type="binding site" evidence="1">
    <location>
        <position position="289"/>
    </location>
    <ligand>
        <name>Mg(2+)</name>
        <dbReference type="ChEBI" id="CHEBI:18420"/>
    </ligand>
</feature>
<feature type="binding site" evidence="1">
    <location>
        <position position="289"/>
    </location>
    <ligand>
        <name>substrate</name>
    </ligand>
</feature>
<feature type="binding site" evidence="1">
    <location>
        <begin position="339"/>
        <end position="341"/>
    </location>
    <ligand>
        <name>substrate</name>
    </ligand>
</feature>
<feature type="binding site" evidence="1">
    <location>
        <position position="368"/>
    </location>
    <ligand>
        <name>substrate</name>
    </ligand>
</feature>
<feature type="binding site" evidence="1">
    <location>
        <position position="422"/>
    </location>
    <ligand>
        <name>substrate</name>
    </ligand>
</feature>
<evidence type="ECO:0000250" key="1"/>
<evidence type="ECO:0000305" key="2"/>
<dbReference type="EC" id="4.2.1.40"/>
<dbReference type="EMBL" id="AE005174">
    <property type="protein sequence ID" value="AAG57900.1"/>
    <property type="molecule type" value="Genomic_DNA"/>
</dbReference>
<dbReference type="EMBL" id="BA000007">
    <property type="protein sequence ID" value="BAB37070.1"/>
    <property type="molecule type" value="Genomic_DNA"/>
</dbReference>
<dbReference type="PIR" id="G91084">
    <property type="entry name" value="G91084"/>
</dbReference>
<dbReference type="RefSeq" id="NP_311674.1">
    <property type="nucleotide sequence ID" value="NC_002695.1"/>
</dbReference>
<dbReference type="RefSeq" id="WP_000098255.1">
    <property type="nucleotide sequence ID" value="NZ_VOAI01000003.1"/>
</dbReference>
<dbReference type="SMR" id="P0AES3"/>
<dbReference type="STRING" id="155864.Z4102"/>
<dbReference type="GeneID" id="916552"/>
<dbReference type="KEGG" id="ece:Z4102"/>
<dbReference type="KEGG" id="ecs:ECs_3647"/>
<dbReference type="PATRIC" id="fig|386585.9.peg.3811"/>
<dbReference type="eggNOG" id="COG4948">
    <property type="taxonomic scope" value="Bacteria"/>
</dbReference>
<dbReference type="HOGENOM" id="CLU_030273_9_0_6"/>
<dbReference type="OMA" id="MQYLIPN"/>
<dbReference type="UniPathway" id="UPA00564">
    <property type="reaction ID" value="UER00627"/>
</dbReference>
<dbReference type="Proteomes" id="UP000000558">
    <property type="component" value="Chromosome"/>
</dbReference>
<dbReference type="Proteomes" id="UP000002519">
    <property type="component" value="Chromosome"/>
</dbReference>
<dbReference type="GO" id="GO:0008872">
    <property type="term" value="F:glucarate dehydratase activity"/>
    <property type="evidence" value="ECO:0007669"/>
    <property type="project" value="UniProtKB-EC"/>
</dbReference>
<dbReference type="GO" id="GO:0000287">
    <property type="term" value="F:magnesium ion binding"/>
    <property type="evidence" value="ECO:0007669"/>
    <property type="project" value="InterPro"/>
</dbReference>
<dbReference type="GO" id="GO:0042838">
    <property type="term" value="P:D-glucarate catabolic process"/>
    <property type="evidence" value="ECO:0007669"/>
    <property type="project" value="UniProtKB-UniPathway"/>
</dbReference>
<dbReference type="CDD" id="cd03323">
    <property type="entry name" value="D-glucarate_dehydratase"/>
    <property type="match status" value="1"/>
</dbReference>
<dbReference type="FunFam" id="3.20.20.120:FF:000003">
    <property type="entry name" value="Glucarate dehydratase"/>
    <property type="match status" value="1"/>
</dbReference>
<dbReference type="Gene3D" id="3.20.20.120">
    <property type="entry name" value="Enolase-like C-terminal domain"/>
    <property type="match status" value="1"/>
</dbReference>
<dbReference type="Gene3D" id="3.30.390.10">
    <property type="entry name" value="Enolase-like, N-terminal domain"/>
    <property type="match status" value="1"/>
</dbReference>
<dbReference type="InterPro" id="IPR034593">
    <property type="entry name" value="DgoD-like"/>
</dbReference>
<dbReference type="InterPro" id="IPR036849">
    <property type="entry name" value="Enolase-like_C_sf"/>
</dbReference>
<dbReference type="InterPro" id="IPR029017">
    <property type="entry name" value="Enolase-like_N"/>
</dbReference>
<dbReference type="InterPro" id="IPR029065">
    <property type="entry name" value="Enolase_C-like"/>
</dbReference>
<dbReference type="InterPro" id="IPR017653">
    <property type="entry name" value="Glucarate_dehydratase"/>
</dbReference>
<dbReference type="InterPro" id="IPR034598">
    <property type="entry name" value="GlucD-like"/>
</dbReference>
<dbReference type="InterPro" id="IPR013342">
    <property type="entry name" value="Mandelate_racemase_C"/>
</dbReference>
<dbReference type="NCBIfam" id="TIGR03247">
    <property type="entry name" value="glucar-dehydr"/>
    <property type="match status" value="1"/>
</dbReference>
<dbReference type="PANTHER" id="PTHR48080">
    <property type="entry name" value="D-GALACTONATE DEHYDRATASE-RELATED"/>
    <property type="match status" value="1"/>
</dbReference>
<dbReference type="PANTHER" id="PTHR48080:SF4">
    <property type="entry name" value="GLUCARATE DEHYDRATASE"/>
    <property type="match status" value="1"/>
</dbReference>
<dbReference type="Pfam" id="PF13378">
    <property type="entry name" value="MR_MLE_C"/>
    <property type="match status" value="1"/>
</dbReference>
<dbReference type="SFLD" id="SFLDS00001">
    <property type="entry name" value="Enolase"/>
    <property type="match status" value="1"/>
</dbReference>
<dbReference type="SFLD" id="SFLDF00005">
    <property type="entry name" value="glucarate_dehydratase"/>
    <property type="match status" value="1"/>
</dbReference>
<dbReference type="SMART" id="SM00922">
    <property type="entry name" value="MR_MLE"/>
    <property type="match status" value="1"/>
</dbReference>
<dbReference type="SUPFAM" id="SSF51604">
    <property type="entry name" value="Enolase C-terminal domain-like"/>
    <property type="match status" value="1"/>
</dbReference>
<dbReference type="SUPFAM" id="SSF54826">
    <property type="entry name" value="Enolase N-terminal domain-like"/>
    <property type="match status" value="1"/>
</dbReference>
<keyword id="KW-0456">Lyase</keyword>
<keyword id="KW-0460">Magnesium</keyword>
<keyword id="KW-0479">Metal-binding</keyword>
<keyword id="KW-1185">Reference proteome</keyword>